<organism>
    <name type="scientific">Salmonella paratyphi C (strain RKS4594)</name>
    <dbReference type="NCBI Taxonomy" id="476213"/>
    <lineage>
        <taxon>Bacteria</taxon>
        <taxon>Pseudomonadati</taxon>
        <taxon>Pseudomonadota</taxon>
        <taxon>Gammaproteobacteria</taxon>
        <taxon>Enterobacterales</taxon>
        <taxon>Enterobacteriaceae</taxon>
        <taxon>Salmonella</taxon>
    </lineage>
</organism>
<protein>
    <recommendedName>
        <fullName evidence="1">Protein-L-isoaspartate O-methyltransferase</fullName>
        <ecNumber evidence="1">2.1.1.77</ecNumber>
    </recommendedName>
    <alternativeName>
        <fullName evidence="1">L-isoaspartyl protein carboxyl methyltransferase</fullName>
    </alternativeName>
    <alternativeName>
        <fullName evidence="1">Protein L-isoaspartyl methyltransferase</fullName>
    </alternativeName>
    <alternativeName>
        <fullName evidence="1">Protein-beta-aspartate methyltransferase</fullName>
        <shortName evidence="1">PIMT</shortName>
    </alternativeName>
</protein>
<name>PIMT_SALPC</name>
<keyword id="KW-0963">Cytoplasm</keyword>
<keyword id="KW-0489">Methyltransferase</keyword>
<keyword id="KW-0949">S-adenosyl-L-methionine</keyword>
<keyword id="KW-0808">Transferase</keyword>
<proteinExistence type="inferred from homology"/>
<comment type="function">
    <text evidence="1">Catalyzes the methyl esterification of L-isoaspartyl residues in peptides and proteins that result from spontaneous decomposition of normal L-aspartyl and L-asparaginyl residues. It plays a role in the repair and/or degradation of damaged proteins.</text>
</comment>
<comment type="catalytic activity">
    <reaction evidence="1">
        <text>[protein]-L-isoaspartate + S-adenosyl-L-methionine = [protein]-L-isoaspartate alpha-methyl ester + S-adenosyl-L-homocysteine</text>
        <dbReference type="Rhea" id="RHEA:12705"/>
        <dbReference type="Rhea" id="RHEA-COMP:12143"/>
        <dbReference type="Rhea" id="RHEA-COMP:12144"/>
        <dbReference type="ChEBI" id="CHEBI:57856"/>
        <dbReference type="ChEBI" id="CHEBI:59789"/>
        <dbReference type="ChEBI" id="CHEBI:90596"/>
        <dbReference type="ChEBI" id="CHEBI:90598"/>
        <dbReference type="EC" id="2.1.1.77"/>
    </reaction>
</comment>
<comment type="subcellular location">
    <subcellularLocation>
        <location evidence="1">Cytoplasm</location>
    </subcellularLocation>
</comment>
<comment type="similarity">
    <text evidence="1">Belongs to the methyltransferase superfamily. L-isoaspartyl/D-aspartyl protein methyltransferase family.</text>
</comment>
<accession>C0PXA3</accession>
<sequence>MVSGRVQALLEQLRAQGIRDEQVLNALAAVPREKFIDEAFEHKAWENIALPIGQGQTISQPYMVARMTELLELTPQSRVLEIGTGSGYQTAILAHLVHHVCSVERIKGLQWQARRRLKQLDLHNVSTRHGDGWQGWQARAPFDAIIVTAAPPEIPTALMAQLDEGGILVLPVGDEQQFLKRVRRRGGEFIIDTVEAVRFVPLVKGELA</sequence>
<dbReference type="EC" id="2.1.1.77" evidence="1"/>
<dbReference type="EMBL" id="CP000857">
    <property type="protein sequence ID" value="ACN47061.1"/>
    <property type="molecule type" value="Genomic_DNA"/>
</dbReference>
<dbReference type="RefSeq" id="WP_000253545.1">
    <property type="nucleotide sequence ID" value="NC_012125.1"/>
</dbReference>
<dbReference type="SMR" id="C0PXA3"/>
<dbReference type="KEGG" id="sei:SPC_2969"/>
<dbReference type="HOGENOM" id="CLU_055432_2_0_6"/>
<dbReference type="Proteomes" id="UP000001599">
    <property type="component" value="Chromosome"/>
</dbReference>
<dbReference type="GO" id="GO:0005737">
    <property type="term" value="C:cytoplasm"/>
    <property type="evidence" value="ECO:0007669"/>
    <property type="project" value="UniProtKB-SubCell"/>
</dbReference>
<dbReference type="GO" id="GO:0004719">
    <property type="term" value="F:protein-L-isoaspartate (D-aspartate) O-methyltransferase activity"/>
    <property type="evidence" value="ECO:0007669"/>
    <property type="project" value="UniProtKB-UniRule"/>
</dbReference>
<dbReference type="GO" id="GO:0032259">
    <property type="term" value="P:methylation"/>
    <property type="evidence" value="ECO:0007669"/>
    <property type="project" value="UniProtKB-KW"/>
</dbReference>
<dbReference type="GO" id="GO:0036211">
    <property type="term" value="P:protein modification process"/>
    <property type="evidence" value="ECO:0007669"/>
    <property type="project" value="UniProtKB-UniRule"/>
</dbReference>
<dbReference type="GO" id="GO:0030091">
    <property type="term" value="P:protein repair"/>
    <property type="evidence" value="ECO:0007669"/>
    <property type="project" value="UniProtKB-UniRule"/>
</dbReference>
<dbReference type="CDD" id="cd02440">
    <property type="entry name" value="AdoMet_MTases"/>
    <property type="match status" value="1"/>
</dbReference>
<dbReference type="FunFam" id="3.40.50.150:FF:000010">
    <property type="entry name" value="Protein-L-isoaspartate O-methyltransferase"/>
    <property type="match status" value="1"/>
</dbReference>
<dbReference type="Gene3D" id="3.40.50.150">
    <property type="entry name" value="Vaccinia Virus protein VP39"/>
    <property type="match status" value="1"/>
</dbReference>
<dbReference type="HAMAP" id="MF_00090">
    <property type="entry name" value="PIMT"/>
    <property type="match status" value="1"/>
</dbReference>
<dbReference type="InterPro" id="IPR000682">
    <property type="entry name" value="PCMT"/>
</dbReference>
<dbReference type="InterPro" id="IPR029063">
    <property type="entry name" value="SAM-dependent_MTases_sf"/>
</dbReference>
<dbReference type="NCBIfam" id="TIGR00080">
    <property type="entry name" value="pimt"/>
    <property type="match status" value="1"/>
</dbReference>
<dbReference type="NCBIfam" id="NF001453">
    <property type="entry name" value="PRK00312.1"/>
    <property type="match status" value="1"/>
</dbReference>
<dbReference type="PANTHER" id="PTHR11579">
    <property type="entry name" value="PROTEIN-L-ISOASPARTATE O-METHYLTRANSFERASE"/>
    <property type="match status" value="1"/>
</dbReference>
<dbReference type="PANTHER" id="PTHR11579:SF0">
    <property type="entry name" value="PROTEIN-L-ISOASPARTATE(D-ASPARTATE) O-METHYLTRANSFERASE"/>
    <property type="match status" value="1"/>
</dbReference>
<dbReference type="Pfam" id="PF01135">
    <property type="entry name" value="PCMT"/>
    <property type="match status" value="1"/>
</dbReference>
<dbReference type="SUPFAM" id="SSF53335">
    <property type="entry name" value="S-adenosyl-L-methionine-dependent methyltransferases"/>
    <property type="match status" value="1"/>
</dbReference>
<dbReference type="PROSITE" id="PS01279">
    <property type="entry name" value="PCMT"/>
    <property type="match status" value="1"/>
</dbReference>
<reference key="1">
    <citation type="journal article" date="2009" name="PLoS ONE">
        <title>Salmonella paratyphi C: genetic divergence from Salmonella choleraesuis and pathogenic convergence with Salmonella typhi.</title>
        <authorList>
            <person name="Liu W.-Q."/>
            <person name="Feng Y."/>
            <person name="Wang Y."/>
            <person name="Zou Q.-H."/>
            <person name="Chen F."/>
            <person name="Guo J.-T."/>
            <person name="Peng Y.-H."/>
            <person name="Jin Y."/>
            <person name="Li Y.-G."/>
            <person name="Hu S.-N."/>
            <person name="Johnston R.N."/>
            <person name="Liu G.-R."/>
            <person name="Liu S.-L."/>
        </authorList>
    </citation>
    <scope>NUCLEOTIDE SEQUENCE [LARGE SCALE GENOMIC DNA]</scope>
    <source>
        <strain>RKS4594</strain>
    </source>
</reference>
<evidence type="ECO:0000255" key="1">
    <source>
        <dbReference type="HAMAP-Rule" id="MF_00090"/>
    </source>
</evidence>
<feature type="chain" id="PRO_1000192398" description="Protein-L-isoaspartate O-methyltransferase">
    <location>
        <begin position="1"/>
        <end position="208"/>
    </location>
</feature>
<feature type="active site" evidence="1">
    <location>
        <position position="59"/>
    </location>
</feature>
<gene>
    <name evidence="1" type="primary">pcm</name>
    <name type="ordered locus">SPC_2969</name>
</gene>